<name>MEI4_MOUSE</name>
<evidence type="ECO:0000269" key="1">
    <source>
    </source>
</evidence>
<evidence type="ECO:0000269" key="2">
    <source>
    </source>
</evidence>
<evidence type="ECO:0000269" key="3">
    <source>
    </source>
</evidence>
<evidence type="ECO:0000269" key="4">
    <source>
    </source>
</evidence>
<evidence type="ECO:0000303" key="5">
    <source>
    </source>
</evidence>
<evidence type="ECO:0000303" key="6">
    <source>
    </source>
</evidence>
<evidence type="ECO:0000305" key="7"/>
<evidence type="ECO:0000312" key="8">
    <source>
        <dbReference type="MGI" id="MGI:1922283"/>
    </source>
</evidence>
<accession>Q8BRM6</accession>
<accession>Q4V9Z7</accession>
<accession>Q8C4E8</accession>
<gene>
    <name evidence="6 8" type="primary">Mei4</name>
</gene>
<protein>
    <recommendedName>
        <fullName evidence="7">Meiosis-specific protein MEI4</fullName>
    </recommendedName>
</protein>
<keyword id="KW-0025">Alternative splicing</keyword>
<keyword id="KW-0158">Chromosome</keyword>
<keyword id="KW-0233">DNA recombination</keyword>
<keyword id="KW-0469">Meiosis</keyword>
<keyword id="KW-1185">Reference proteome</keyword>
<reference key="1">
    <citation type="journal article" date="2005" name="Science">
        <title>The transcriptional landscape of the mammalian genome.</title>
        <authorList>
            <person name="Carninci P."/>
            <person name="Kasukawa T."/>
            <person name="Katayama S."/>
            <person name="Gough J."/>
            <person name="Frith M.C."/>
            <person name="Maeda N."/>
            <person name="Oyama R."/>
            <person name="Ravasi T."/>
            <person name="Lenhard B."/>
            <person name="Wells C."/>
            <person name="Kodzius R."/>
            <person name="Shimokawa K."/>
            <person name="Bajic V.B."/>
            <person name="Brenner S.E."/>
            <person name="Batalov S."/>
            <person name="Forrest A.R."/>
            <person name="Zavolan M."/>
            <person name="Davis M.J."/>
            <person name="Wilming L.G."/>
            <person name="Aidinis V."/>
            <person name="Allen J.E."/>
            <person name="Ambesi-Impiombato A."/>
            <person name="Apweiler R."/>
            <person name="Aturaliya R.N."/>
            <person name="Bailey T.L."/>
            <person name="Bansal M."/>
            <person name="Baxter L."/>
            <person name="Beisel K.W."/>
            <person name="Bersano T."/>
            <person name="Bono H."/>
            <person name="Chalk A.M."/>
            <person name="Chiu K.P."/>
            <person name="Choudhary V."/>
            <person name="Christoffels A."/>
            <person name="Clutterbuck D.R."/>
            <person name="Crowe M.L."/>
            <person name="Dalla E."/>
            <person name="Dalrymple B.P."/>
            <person name="de Bono B."/>
            <person name="Della Gatta G."/>
            <person name="di Bernardo D."/>
            <person name="Down T."/>
            <person name="Engstrom P."/>
            <person name="Fagiolini M."/>
            <person name="Faulkner G."/>
            <person name="Fletcher C.F."/>
            <person name="Fukushima T."/>
            <person name="Furuno M."/>
            <person name="Futaki S."/>
            <person name="Gariboldi M."/>
            <person name="Georgii-Hemming P."/>
            <person name="Gingeras T.R."/>
            <person name="Gojobori T."/>
            <person name="Green R.E."/>
            <person name="Gustincich S."/>
            <person name="Harbers M."/>
            <person name="Hayashi Y."/>
            <person name="Hensch T.K."/>
            <person name="Hirokawa N."/>
            <person name="Hill D."/>
            <person name="Huminiecki L."/>
            <person name="Iacono M."/>
            <person name="Ikeo K."/>
            <person name="Iwama A."/>
            <person name="Ishikawa T."/>
            <person name="Jakt M."/>
            <person name="Kanapin A."/>
            <person name="Katoh M."/>
            <person name="Kawasawa Y."/>
            <person name="Kelso J."/>
            <person name="Kitamura H."/>
            <person name="Kitano H."/>
            <person name="Kollias G."/>
            <person name="Krishnan S.P."/>
            <person name="Kruger A."/>
            <person name="Kummerfeld S.K."/>
            <person name="Kurochkin I.V."/>
            <person name="Lareau L.F."/>
            <person name="Lazarevic D."/>
            <person name="Lipovich L."/>
            <person name="Liu J."/>
            <person name="Liuni S."/>
            <person name="McWilliam S."/>
            <person name="Madan Babu M."/>
            <person name="Madera M."/>
            <person name="Marchionni L."/>
            <person name="Matsuda H."/>
            <person name="Matsuzawa S."/>
            <person name="Miki H."/>
            <person name="Mignone F."/>
            <person name="Miyake S."/>
            <person name="Morris K."/>
            <person name="Mottagui-Tabar S."/>
            <person name="Mulder N."/>
            <person name="Nakano N."/>
            <person name="Nakauchi H."/>
            <person name="Ng P."/>
            <person name="Nilsson R."/>
            <person name="Nishiguchi S."/>
            <person name="Nishikawa S."/>
            <person name="Nori F."/>
            <person name="Ohara O."/>
            <person name="Okazaki Y."/>
            <person name="Orlando V."/>
            <person name="Pang K.C."/>
            <person name="Pavan W.J."/>
            <person name="Pavesi G."/>
            <person name="Pesole G."/>
            <person name="Petrovsky N."/>
            <person name="Piazza S."/>
            <person name="Reed J."/>
            <person name="Reid J.F."/>
            <person name="Ring B.Z."/>
            <person name="Ringwald M."/>
            <person name="Rost B."/>
            <person name="Ruan Y."/>
            <person name="Salzberg S.L."/>
            <person name="Sandelin A."/>
            <person name="Schneider C."/>
            <person name="Schoenbach C."/>
            <person name="Sekiguchi K."/>
            <person name="Semple C.A."/>
            <person name="Seno S."/>
            <person name="Sessa L."/>
            <person name="Sheng Y."/>
            <person name="Shibata Y."/>
            <person name="Shimada H."/>
            <person name="Shimada K."/>
            <person name="Silva D."/>
            <person name="Sinclair B."/>
            <person name="Sperling S."/>
            <person name="Stupka E."/>
            <person name="Sugiura K."/>
            <person name="Sultana R."/>
            <person name="Takenaka Y."/>
            <person name="Taki K."/>
            <person name="Tammoja K."/>
            <person name="Tan S.L."/>
            <person name="Tang S."/>
            <person name="Taylor M.S."/>
            <person name="Tegner J."/>
            <person name="Teichmann S.A."/>
            <person name="Ueda H.R."/>
            <person name="van Nimwegen E."/>
            <person name="Verardo R."/>
            <person name="Wei C.L."/>
            <person name="Yagi K."/>
            <person name="Yamanishi H."/>
            <person name="Zabarovsky E."/>
            <person name="Zhu S."/>
            <person name="Zimmer A."/>
            <person name="Hide W."/>
            <person name="Bult C."/>
            <person name="Grimmond S.M."/>
            <person name="Teasdale R.D."/>
            <person name="Liu E.T."/>
            <person name="Brusic V."/>
            <person name="Quackenbush J."/>
            <person name="Wahlestedt C."/>
            <person name="Mattick J.S."/>
            <person name="Hume D.A."/>
            <person name="Kai C."/>
            <person name="Sasaki D."/>
            <person name="Tomaru Y."/>
            <person name="Fukuda S."/>
            <person name="Kanamori-Katayama M."/>
            <person name="Suzuki M."/>
            <person name="Aoki J."/>
            <person name="Arakawa T."/>
            <person name="Iida J."/>
            <person name="Imamura K."/>
            <person name="Itoh M."/>
            <person name="Kato T."/>
            <person name="Kawaji H."/>
            <person name="Kawagashira N."/>
            <person name="Kawashima T."/>
            <person name="Kojima M."/>
            <person name="Kondo S."/>
            <person name="Konno H."/>
            <person name="Nakano K."/>
            <person name="Ninomiya N."/>
            <person name="Nishio T."/>
            <person name="Okada M."/>
            <person name="Plessy C."/>
            <person name="Shibata K."/>
            <person name="Shiraki T."/>
            <person name="Suzuki S."/>
            <person name="Tagami M."/>
            <person name="Waki K."/>
            <person name="Watahiki A."/>
            <person name="Okamura-Oho Y."/>
            <person name="Suzuki H."/>
            <person name="Kawai J."/>
            <person name="Hayashizaki Y."/>
        </authorList>
    </citation>
    <scope>NUCLEOTIDE SEQUENCE [LARGE SCALE MRNA] (ISOFORMS 1 AND 2)</scope>
    <source>
        <strain>C57BL/6J</strain>
        <tissue>Brain cortex</tissue>
        <tissue>Cerebellum</tissue>
    </source>
</reference>
<reference key="2">
    <citation type="journal article" date="2009" name="PLoS Biol.">
        <title>Lineage-specific biology revealed by a finished genome assembly of the mouse.</title>
        <authorList>
            <person name="Church D.M."/>
            <person name="Goodstadt L."/>
            <person name="Hillier L.W."/>
            <person name="Zody M.C."/>
            <person name="Goldstein S."/>
            <person name="She X."/>
            <person name="Bult C.J."/>
            <person name="Agarwala R."/>
            <person name="Cherry J.L."/>
            <person name="DiCuccio M."/>
            <person name="Hlavina W."/>
            <person name="Kapustin Y."/>
            <person name="Meric P."/>
            <person name="Maglott D."/>
            <person name="Birtle Z."/>
            <person name="Marques A.C."/>
            <person name="Graves T."/>
            <person name="Zhou S."/>
            <person name="Teague B."/>
            <person name="Potamousis K."/>
            <person name="Churas C."/>
            <person name="Place M."/>
            <person name="Herschleb J."/>
            <person name="Runnheim R."/>
            <person name="Forrest D."/>
            <person name="Amos-Landgraf J."/>
            <person name="Schwartz D.C."/>
            <person name="Cheng Z."/>
            <person name="Lindblad-Toh K."/>
            <person name="Eichler E.E."/>
            <person name="Ponting C.P."/>
        </authorList>
    </citation>
    <scope>NUCLEOTIDE SEQUENCE [LARGE SCALE GENOMIC DNA]</scope>
    <source>
        <strain>C57BL/6J</strain>
    </source>
</reference>
<reference key="3">
    <citation type="journal article" date="2004" name="Genome Res.">
        <title>The status, quality, and expansion of the NIH full-length cDNA project: the Mammalian Gene Collection (MGC).</title>
        <authorList>
            <consortium name="The MGC Project Team"/>
        </authorList>
    </citation>
    <scope>NUCLEOTIDE SEQUENCE [LARGE SCALE MRNA] (ISOFORM 1)</scope>
    <source>
        <tissue>Eye</tissue>
    </source>
</reference>
<reference key="4">
    <citation type="journal article" date="2010" name="Genes Dev.">
        <title>Functional conservation of Mei4 for meiotic DNA double-strand break formation from yeasts to mice.</title>
        <authorList>
            <person name="Kumar R."/>
            <person name="Bourbon H.M."/>
            <person name="de Massy B."/>
        </authorList>
    </citation>
    <scope>FUNCTION</scope>
    <scope>INTERACTION WITH REC114</scope>
    <scope>SUBCELLULAR LOCATION</scope>
    <scope>TISSUE SPECIFICITY</scope>
    <scope>DEVELOPMENTAL STAGE</scope>
    <scope>DISRUPTION PHENOTYPE</scope>
</reference>
<reference key="5">
    <citation type="journal article" date="2015" name="J. Cell Sci.">
        <title>MEI4 - a central player in the regulation of meiotic DNA double-strand break formation in the mouse.</title>
        <authorList>
            <person name="Kumar R."/>
            <person name="Ghyselinck N."/>
            <person name="Ishiguro K."/>
            <person name="Watanabe Y."/>
            <person name="Kouznetsova A."/>
            <person name="Hoeoeg C."/>
            <person name="Strong E."/>
            <person name="Schimenti J."/>
            <person name="Daniel K."/>
            <person name="Toth A."/>
            <person name="de Massy B."/>
        </authorList>
    </citation>
    <scope>FUNCTION</scope>
    <scope>SUBCELLULAR LOCATION</scope>
</reference>
<reference key="6">
    <citation type="journal article" date="2016" name="Nat. Cell Biol.">
        <title>Meiotic DNA break formation requires the unsynapsed chromosome axis-binding protein IHO1 (CCDC36) in mice.</title>
        <authorList>
            <person name="Stanzione M."/>
            <person name="Baumann M."/>
            <person name="Papanikos F."/>
            <person name="Dereli I."/>
            <person name="Lange J."/>
            <person name="Ramlal A."/>
            <person name="Traenkner D."/>
            <person name="Shibuya H."/>
            <person name="de Massy B."/>
            <person name="Watanabe Y."/>
            <person name="Jasin M."/>
            <person name="Keeney S."/>
            <person name="Toth A."/>
        </authorList>
    </citation>
    <scope>IDENTIFICATION IN THE MCD RECOMBINOSOME COMPLEX</scope>
    <scope>SUBCELLULAR LOCATION</scope>
</reference>
<reference key="7">
    <citation type="journal article" date="2018" name="Life. Sci Alliance">
        <title>Mouse REC114 is essential for meiotic DNA double-strand break formation and forms a complex with MEI4.</title>
        <authorList>
            <person name="Kumar R."/>
            <person name="Oliver C."/>
            <person name="Brun C."/>
            <person name="Juarez-Martinez A.B."/>
            <person name="Tarabay Y."/>
            <person name="Kadlec J."/>
            <person name="de Massy B."/>
        </authorList>
    </citation>
    <scope>IDENTIFICATION IN A COMPLEX WITH REC114 AND IHO1</scope>
    <scope>INTERACTION WITH REC114 AND IHO1</scope>
    <scope>SUBCELLULAR LOCATION</scope>
</reference>
<comment type="function">
    <text evidence="1 2 3">Required for DNA double-strand breaks (DSBs) formation in unsynapsed regions during meiotic recombination (PubMed:20551173, PubMed:25795304, PubMed:27723721). Probably acts by forming a complex with IHO1 and REC114, which activates DSBs formation in unsynapsed regions, an essential step to ensure completion of synapsis (PubMed:27723721).</text>
</comment>
<comment type="subunit">
    <text evidence="1 3 4">Part of the MCD recombinosome complex, at least composed of IHO1, REC114 and MEI4 (PubMed:27723721, PubMed:30569039). Forms a complex with REC114; the interaction is required for MEI4 stability (PubMed:20551173, PubMed:30569039). Interacts (via N-terminal domain) with REC114 (via C-terminal domain) (PubMed:20551173, PubMed:30569039). Interacts with IHO1 (PubMed:30569039).</text>
</comment>
<comment type="interaction">
    <interactant intactId="EBI-9548252">
        <id>Q8BRM6</id>
    </interactant>
    <interactant intactId="EBI-9548270">
        <id>Q9CWH4</id>
        <label>Rec114</label>
    </interactant>
    <organismsDiffer>false</organismsDiffer>
    <experiments>5</experiments>
</comment>
<comment type="subcellular location">
    <subcellularLocation>
        <location evidence="1 2 4">Chromosome</location>
    </subcellularLocation>
    <text evidence="1 2 3">Specifically localizes to unsynapsed chromosomal regions during meiosis (PubMed:25795304, PubMed:27723721). Located in discrete foci on the axes of meiotic chromosomes. The number of foci is highest at leptonema, decreases at zygonema and is strongly reduced in pachynema and subsequent stages (PubMed:20551173).</text>
</comment>
<comment type="alternative products">
    <event type="alternative splicing"/>
    <isoform>
        <id>Q8BRM6-1</id>
        <name>1</name>
        <sequence type="displayed"/>
    </isoform>
    <isoform>
        <id>Q8BRM6-2</id>
        <name>2</name>
        <sequence type="described" ref="VSP_034675"/>
    </isoform>
</comment>
<comment type="tissue specificity">
    <text evidence="1">Expressed in adult testis and brain and in embryonic ovary.</text>
</comment>
<comment type="developmental stage">
    <text evidence="1">In the testis, expression is detected at 4 days postpartum (dpp) with a peak between days 10 and 14. Levels decrease by 18 dpp with a further decrease in the adult.</text>
</comment>
<comment type="disruption phenotype">
    <text evidence="1">Deficient DNA double-strand break formation during meiotic recombination.</text>
</comment>
<comment type="similarity">
    <text evidence="7">Belongs to the MEI4L family.</text>
</comment>
<comment type="sequence caution" evidence="7">
    <conflict type="frameshift">
        <sequence resource="EMBL-CDS" id="BAC38486"/>
    </conflict>
</comment>
<sequence>MDIQPWYLKTSKLALALAIIHSKPADRSSREYTEYLASLVTQKESTWKSKLEALEAEVLQLRQKLLLSRISSGLFKNGPDVLPTLSDQEPTSSENTLTLMDDSGCVLSNEQRNEPAELSQHFVESTDPPLLPLPLEKRPRTTLENPLSSHMQFFQHLLELKKWTESSSLKVYLTHFEKDSSTVSDSVSQLLDALITFYRNPKLPFSSFWTEAVGTLARLASDFNLSNHIFKRCSKKLEEFEKTLLQAILENNSINRFQVQRYVSQSLVTLGSCSLLRKSIISLLLSEVNSFVDDLGAIDQDQGIYDVTRYENIFSLFWILEQVLQQAPQGDRTAHMDHSIPEMQTFLQKHDEVIFRLSDAFPLFAFYLWRLGVLLNSAEMETVKNESLP</sequence>
<organism>
    <name type="scientific">Mus musculus</name>
    <name type="common">Mouse</name>
    <dbReference type="NCBI Taxonomy" id="10090"/>
    <lineage>
        <taxon>Eukaryota</taxon>
        <taxon>Metazoa</taxon>
        <taxon>Chordata</taxon>
        <taxon>Craniata</taxon>
        <taxon>Vertebrata</taxon>
        <taxon>Euteleostomi</taxon>
        <taxon>Mammalia</taxon>
        <taxon>Eutheria</taxon>
        <taxon>Euarchontoglires</taxon>
        <taxon>Glires</taxon>
        <taxon>Rodentia</taxon>
        <taxon>Myomorpha</taxon>
        <taxon>Muroidea</taxon>
        <taxon>Muridae</taxon>
        <taxon>Murinae</taxon>
        <taxon>Mus</taxon>
        <taxon>Mus</taxon>
    </lineage>
</organism>
<feature type="chain" id="PRO_0000343704" description="Meiosis-specific protein MEI4">
    <location>
        <begin position="1"/>
        <end position="389"/>
    </location>
</feature>
<feature type="region of interest" description="Interaction with REC114" evidence="4">
    <location>
        <begin position="1"/>
        <end position="127"/>
    </location>
</feature>
<feature type="splice variant" id="VSP_034675" description="In isoform 2." evidence="5">
    <original>DQGIYDVTRYENIFSLFWILEQVLQQAPQGDRTAHMDHSIPEMQTFLQKHDEVIFRLSDAFPLFAFYLWRLGVLLNSAEMETVKNESLP</original>
    <variation>ALPVELADSIQA</variation>
    <location>
        <begin position="301"/>
        <end position="389"/>
    </location>
</feature>
<feature type="sequence conflict" description="In Ref. 3; AAH96613." evidence="7" ref="3">
    <original>E</original>
    <variation>D</variation>
    <location>
        <position position="44"/>
    </location>
</feature>
<dbReference type="EMBL" id="AK043929">
    <property type="protein sequence ID" value="BAC31705.1"/>
    <property type="molecule type" value="mRNA"/>
</dbReference>
<dbReference type="EMBL" id="AK082395">
    <property type="protein sequence ID" value="BAC38486.1"/>
    <property type="status" value="ALT_FRAME"/>
    <property type="molecule type" value="mRNA"/>
</dbReference>
<dbReference type="EMBL" id="AC122931">
    <property type="status" value="NOT_ANNOTATED_CDS"/>
    <property type="molecule type" value="Genomic_DNA"/>
</dbReference>
<dbReference type="EMBL" id="AC132430">
    <property type="status" value="NOT_ANNOTATED_CDS"/>
    <property type="molecule type" value="Genomic_DNA"/>
</dbReference>
<dbReference type="EMBL" id="BC096613">
    <property type="protein sequence ID" value="AAH96613.1"/>
    <property type="molecule type" value="mRNA"/>
</dbReference>
<dbReference type="CCDS" id="CCDS23371.1">
    <molecule id="Q8BRM6-1"/>
</dbReference>
<dbReference type="CCDS" id="CCDS90635.1">
    <molecule id="Q8BRM6-2"/>
</dbReference>
<dbReference type="RefSeq" id="NP_001344406.1">
    <molecule id="Q8BRM6-2"/>
    <property type="nucleotide sequence ID" value="NM_001357477.1"/>
</dbReference>
<dbReference type="RefSeq" id="NP_780422.1">
    <molecule id="Q8BRM6-1"/>
    <property type="nucleotide sequence ID" value="NM_175213.4"/>
</dbReference>
<dbReference type="RefSeq" id="XP_006511584.1">
    <property type="nucleotide sequence ID" value="XM_006511521.1"/>
</dbReference>
<dbReference type="SMR" id="Q8BRM6"/>
<dbReference type="BioGRID" id="217167">
    <property type="interactions" value="1"/>
</dbReference>
<dbReference type="CORUM" id="Q8BRM6"/>
<dbReference type="FunCoup" id="Q8BRM6">
    <property type="interactions" value="72"/>
</dbReference>
<dbReference type="IntAct" id="Q8BRM6">
    <property type="interactions" value="1"/>
</dbReference>
<dbReference type="STRING" id="10090.ENSMUSP00000061341"/>
<dbReference type="iPTMnet" id="Q8BRM6"/>
<dbReference type="PhosphoSitePlus" id="Q8BRM6"/>
<dbReference type="PaxDb" id="10090-ENSMUSP00000061341"/>
<dbReference type="ProteomicsDB" id="295996">
    <molecule id="Q8BRM6-1"/>
</dbReference>
<dbReference type="Antibodypedia" id="77185">
    <property type="antibodies" value="21 antibodies from 4 providers"/>
</dbReference>
<dbReference type="DNASU" id="75033"/>
<dbReference type="Ensembl" id="ENSMUST00000057067.10">
    <molecule id="Q8BRM6-1"/>
    <property type="protein sequence ID" value="ENSMUSP00000061341.3"/>
    <property type="gene ID" value="ENSMUSG00000043289.13"/>
</dbReference>
<dbReference type="Ensembl" id="ENSMUST00000189832.7">
    <molecule id="Q8BRM6-2"/>
    <property type="protein sequence ID" value="ENSMUSP00000140647.2"/>
    <property type="gene ID" value="ENSMUSG00000043289.13"/>
</dbReference>
<dbReference type="GeneID" id="75033"/>
<dbReference type="KEGG" id="mmu:75033"/>
<dbReference type="UCSC" id="uc009qvp.1">
    <molecule id="Q8BRM6-1"/>
    <property type="organism name" value="mouse"/>
</dbReference>
<dbReference type="AGR" id="MGI:1922283"/>
<dbReference type="CTD" id="101928601"/>
<dbReference type="MGI" id="MGI:1922283">
    <property type="gene designation" value="Mei4"/>
</dbReference>
<dbReference type="VEuPathDB" id="HostDB:ENSMUSG00000043289"/>
<dbReference type="eggNOG" id="ENOG502S31K">
    <property type="taxonomic scope" value="Eukaryota"/>
</dbReference>
<dbReference type="GeneTree" id="ENSGT00390000013856"/>
<dbReference type="HOGENOM" id="CLU_055456_0_0_1"/>
<dbReference type="InParanoid" id="Q8BRM6"/>
<dbReference type="OMA" id="MYDITQY"/>
<dbReference type="OrthoDB" id="6351423at2759"/>
<dbReference type="PhylomeDB" id="Q8BRM6"/>
<dbReference type="TreeFam" id="TF335485"/>
<dbReference type="BioGRID-ORCS" id="75033">
    <property type="hits" value="1 hit in 76 CRISPR screens"/>
</dbReference>
<dbReference type="ChiTaRS" id="Mei4">
    <property type="organism name" value="mouse"/>
</dbReference>
<dbReference type="PRO" id="PR:Q8BRM6"/>
<dbReference type="Proteomes" id="UP000000589">
    <property type="component" value="Chromosome 9"/>
</dbReference>
<dbReference type="RNAct" id="Q8BRM6">
    <property type="molecule type" value="protein"/>
</dbReference>
<dbReference type="Bgee" id="ENSMUSG00000043289">
    <property type="expression patterns" value="Expressed in primary oocyte and 73 other cell types or tissues"/>
</dbReference>
<dbReference type="ExpressionAtlas" id="Q8BRM6">
    <property type="expression patterns" value="baseline and differential"/>
</dbReference>
<dbReference type="GO" id="GO:0005694">
    <property type="term" value="C:chromosome"/>
    <property type="evidence" value="ECO:0000314"/>
    <property type="project" value="UniProtKB"/>
</dbReference>
<dbReference type="GO" id="GO:0000800">
    <property type="term" value="C:lateral element"/>
    <property type="evidence" value="ECO:0000314"/>
    <property type="project" value="MGI"/>
</dbReference>
<dbReference type="GO" id="GO:0006310">
    <property type="term" value="P:DNA recombination"/>
    <property type="evidence" value="ECO:0007669"/>
    <property type="project" value="UniProtKB-KW"/>
</dbReference>
<dbReference type="GO" id="GO:0007129">
    <property type="term" value="P:homologous chromosome pairing at meiosis"/>
    <property type="evidence" value="ECO:0000315"/>
    <property type="project" value="MGI"/>
</dbReference>
<dbReference type="GO" id="GO:0042138">
    <property type="term" value="P:meiotic DNA double-strand break formation"/>
    <property type="evidence" value="ECO:0000315"/>
    <property type="project" value="UniProtKB"/>
</dbReference>
<dbReference type="GO" id="GO:0048477">
    <property type="term" value="P:oogenesis"/>
    <property type="evidence" value="ECO:0000315"/>
    <property type="project" value="MGI"/>
</dbReference>
<dbReference type="GO" id="GO:0007283">
    <property type="term" value="P:spermatogenesis"/>
    <property type="evidence" value="ECO:0000315"/>
    <property type="project" value="MGI"/>
</dbReference>
<dbReference type="InterPro" id="IPR025888">
    <property type="entry name" value="MEI4"/>
</dbReference>
<dbReference type="PANTHER" id="PTHR28575">
    <property type="entry name" value="MEIOSIS-SPECIFIC PROTEIN MEI4"/>
    <property type="match status" value="1"/>
</dbReference>
<dbReference type="PANTHER" id="PTHR28575:SF1">
    <property type="entry name" value="MEIOSIS-SPECIFIC PROTEIN MEI4"/>
    <property type="match status" value="1"/>
</dbReference>
<dbReference type="Pfam" id="PF13971">
    <property type="entry name" value="Mei4"/>
    <property type="match status" value="1"/>
</dbReference>
<proteinExistence type="evidence at protein level"/>